<keyword id="KW-0053">Apoptosis</keyword>
<keyword id="KW-0378">Hydrolase</keyword>
<keyword id="KW-0433">Leucine-rich repeat</keyword>
<keyword id="KW-0464">Manganese</keyword>
<keyword id="KW-0479">Metal-binding</keyword>
<keyword id="KW-0904">Protein phosphatase</keyword>
<keyword id="KW-1185">Reference proteome</keyword>
<keyword id="KW-0677">Repeat</keyword>
<comment type="function">
    <text evidence="4">Protein phosphatase that specifically mediates dephosphorylation of 'Ser-586' of Akt1, a protein that regulates the balance between cell survival and apoptosis through a cascade that primarily alters the function of transcription factors that regulate pro- and antiapoptotic genes. Dephosphorylation of 'Ser-586' of Akt1 triggers apoptosis and suppression of tumor growth.</text>
</comment>
<comment type="catalytic activity">
    <reaction>
        <text>O-phospho-L-seryl-[protein] + H2O = L-seryl-[protein] + phosphate</text>
        <dbReference type="Rhea" id="RHEA:20629"/>
        <dbReference type="Rhea" id="RHEA-COMP:9863"/>
        <dbReference type="Rhea" id="RHEA-COMP:11604"/>
        <dbReference type="ChEBI" id="CHEBI:15377"/>
        <dbReference type="ChEBI" id="CHEBI:29999"/>
        <dbReference type="ChEBI" id="CHEBI:43474"/>
        <dbReference type="ChEBI" id="CHEBI:83421"/>
        <dbReference type="EC" id="3.1.3.16"/>
    </reaction>
</comment>
<comment type="catalytic activity">
    <reaction>
        <text>O-phospho-L-threonyl-[protein] + H2O = L-threonyl-[protein] + phosphate</text>
        <dbReference type="Rhea" id="RHEA:47004"/>
        <dbReference type="Rhea" id="RHEA-COMP:11060"/>
        <dbReference type="Rhea" id="RHEA-COMP:11605"/>
        <dbReference type="ChEBI" id="CHEBI:15377"/>
        <dbReference type="ChEBI" id="CHEBI:30013"/>
        <dbReference type="ChEBI" id="CHEBI:43474"/>
        <dbReference type="ChEBI" id="CHEBI:61977"/>
        <dbReference type="EC" id="3.1.3.16"/>
    </reaction>
</comment>
<comment type="cofactor">
    <cofactor evidence="1">
        <name>Mn(2+)</name>
        <dbReference type="ChEBI" id="CHEBI:29035"/>
    </cofactor>
</comment>
<organism>
    <name type="scientific">Drosophila melanogaster</name>
    <name type="common">Fruit fly</name>
    <dbReference type="NCBI Taxonomy" id="7227"/>
    <lineage>
        <taxon>Eukaryota</taxon>
        <taxon>Metazoa</taxon>
        <taxon>Ecdysozoa</taxon>
        <taxon>Arthropoda</taxon>
        <taxon>Hexapoda</taxon>
        <taxon>Insecta</taxon>
        <taxon>Pterygota</taxon>
        <taxon>Neoptera</taxon>
        <taxon>Endopterygota</taxon>
        <taxon>Diptera</taxon>
        <taxon>Brachycera</taxon>
        <taxon>Muscomorpha</taxon>
        <taxon>Ephydroidea</taxon>
        <taxon>Drosophilidae</taxon>
        <taxon>Drosophila</taxon>
        <taxon>Sophophora</taxon>
    </lineage>
</organism>
<accession>Q9VJ07</accession>
<reference key="1">
    <citation type="journal article" date="2000" name="Science">
        <title>The genome sequence of Drosophila melanogaster.</title>
        <authorList>
            <person name="Adams M.D."/>
            <person name="Celniker S.E."/>
            <person name="Holt R.A."/>
            <person name="Evans C.A."/>
            <person name="Gocayne J.D."/>
            <person name="Amanatides P.G."/>
            <person name="Scherer S.E."/>
            <person name="Li P.W."/>
            <person name="Hoskins R.A."/>
            <person name="Galle R.F."/>
            <person name="George R.A."/>
            <person name="Lewis S.E."/>
            <person name="Richards S."/>
            <person name="Ashburner M."/>
            <person name="Henderson S.N."/>
            <person name="Sutton G.G."/>
            <person name="Wortman J.R."/>
            <person name="Yandell M.D."/>
            <person name="Zhang Q."/>
            <person name="Chen L.X."/>
            <person name="Brandon R.C."/>
            <person name="Rogers Y.-H.C."/>
            <person name="Blazej R.G."/>
            <person name="Champe M."/>
            <person name="Pfeiffer B.D."/>
            <person name="Wan K.H."/>
            <person name="Doyle C."/>
            <person name="Baxter E.G."/>
            <person name="Helt G."/>
            <person name="Nelson C.R."/>
            <person name="Miklos G.L.G."/>
            <person name="Abril J.F."/>
            <person name="Agbayani A."/>
            <person name="An H.-J."/>
            <person name="Andrews-Pfannkoch C."/>
            <person name="Baldwin D."/>
            <person name="Ballew R.M."/>
            <person name="Basu A."/>
            <person name="Baxendale J."/>
            <person name="Bayraktaroglu L."/>
            <person name="Beasley E.M."/>
            <person name="Beeson K.Y."/>
            <person name="Benos P.V."/>
            <person name="Berman B.P."/>
            <person name="Bhandari D."/>
            <person name="Bolshakov S."/>
            <person name="Borkova D."/>
            <person name="Botchan M.R."/>
            <person name="Bouck J."/>
            <person name="Brokstein P."/>
            <person name="Brottier P."/>
            <person name="Burtis K.C."/>
            <person name="Busam D.A."/>
            <person name="Butler H."/>
            <person name="Cadieu E."/>
            <person name="Center A."/>
            <person name="Chandra I."/>
            <person name="Cherry J.M."/>
            <person name="Cawley S."/>
            <person name="Dahlke C."/>
            <person name="Davenport L.B."/>
            <person name="Davies P."/>
            <person name="de Pablos B."/>
            <person name="Delcher A."/>
            <person name="Deng Z."/>
            <person name="Mays A.D."/>
            <person name="Dew I."/>
            <person name="Dietz S.M."/>
            <person name="Dodson K."/>
            <person name="Doup L.E."/>
            <person name="Downes M."/>
            <person name="Dugan-Rocha S."/>
            <person name="Dunkov B.C."/>
            <person name="Dunn P."/>
            <person name="Durbin K.J."/>
            <person name="Evangelista C.C."/>
            <person name="Ferraz C."/>
            <person name="Ferriera S."/>
            <person name="Fleischmann W."/>
            <person name="Fosler C."/>
            <person name="Gabrielian A.E."/>
            <person name="Garg N.S."/>
            <person name="Gelbart W.M."/>
            <person name="Glasser K."/>
            <person name="Glodek A."/>
            <person name="Gong F."/>
            <person name="Gorrell J.H."/>
            <person name="Gu Z."/>
            <person name="Guan P."/>
            <person name="Harris M."/>
            <person name="Harris N.L."/>
            <person name="Harvey D.A."/>
            <person name="Heiman T.J."/>
            <person name="Hernandez J.R."/>
            <person name="Houck J."/>
            <person name="Hostin D."/>
            <person name="Houston K.A."/>
            <person name="Howland T.J."/>
            <person name="Wei M.-H."/>
            <person name="Ibegwam C."/>
            <person name="Jalali M."/>
            <person name="Kalush F."/>
            <person name="Karpen G.H."/>
            <person name="Ke Z."/>
            <person name="Kennison J.A."/>
            <person name="Ketchum K.A."/>
            <person name="Kimmel B.E."/>
            <person name="Kodira C.D."/>
            <person name="Kraft C.L."/>
            <person name="Kravitz S."/>
            <person name="Kulp D."/>
            <person name="Lai Z."/>
            <person name="Lasko P."/>
            <person name="Lei Y."/>
            <person name="Levitsky A.A."/>
            <person name="Li J.H."/>
            <person name="Li Z."/>
            <person name="Liang Y."/>
            <person name="Lin X."/>
            <person name="Liu X."/>
            <person name="Mattei B."/>
            <person name="McIntosh T.C."/>
            <person name="McLeod M.P."/>
            <person name="McPherson D."/>
            <person name="Merkulov G."/>
            <person name="Milshina N.V."/>
            <person name="Mobarry C."/>
            <person name="Morris J."/>
            <person name="Moshrefi A."/>
            <person name="Mount S.M."/>
            <person name="Moy M."/>
            <person name="Murphy B."/>
            <person name="Murphy L."/>
            <person name="Muzny D.M."/>
            <person name="Nelson D.L."/>
            <person name="Nelson D.R."/>
            <person name="Nelson K.A."/>
            <person name="Nixon K."/>
            <person name="Nusskern D.R."/>
            <person name="Pacleb J.M."/>
            <person name="Palazzolo M."/>
            <person name="Pittman G.S."/>
            <person name="Pan S."/>
            <person name="Pollard J."/>
            <person name="Puri V."/>
            <person name="Reese M.G."/>
            <person name="Reinert K."/>
            <person name="Remington K."/>
            <person name="Saunders R.D.C."/>
            <person name="Scheeler F."/>
            <person name="Shen H."/>
            <person name="Shue B.C."/>
            <person name="Siden-Kiamos I."/>
            <person name="Simpson M."/>
            <person name="Skupski M.P."/>
            <person name="Smith T.J."/>
            <person name="Spier E."/>
            <person name="Spradling A.C."/>
            <person name="Stapleton M."/>
            <person name="Strong R."/>
            <person name="Sun E."/>
            <person name="Svirskas R."/>
            <person name="Tector C."/>
            <person name="Turner R."/>
            <person name="Venter E."/>
            <person name="Wang A.H."/>
            <person name="Wang X."/>
            <person name="Wang Z.-Y."/>
            <person name="Wassarman D.A."/>
            <person name="Weinstock G.M."/>
            <person name="Weissenbach J."/>
            <person name="Williams S.M."/>
            <person name="Woodage T."/>
            <person name="Worley K.C."/>
            <person name="Wu D."/>
            <person name="Yang S."/>
            <person name="Yao Q.A."/>
            <person name="Ye J."/>
            <person name="Yeh R.-F."/>
            <person name="Zaveri J.S."/>
            <person name="Zhan M."/>
            <person name="Zhang G."/>
            <person name="Zhao Q."/>
            <person name="Zheng L."/>
            <person name="Zheng X.H."/>
            <person name="Zhong F.N."/>
            <person name="Zhong W."/>
            <person name="Zhou X."/>
            <person name="Zhu S.C."/>
            <person name="Zhu X."/>
            <person name="Smith H.O."/>
            <person name="Gibbs R.A."/>
            <person name="Myers E.W."/>
            <person name="Rubin G.M."/>
            <person name="Venter J.C."/>
        </authorList>
    </citation>
    <scope>NUCLEOTIDE SEQUENCE [LARGE SCALE GENOMIC DNA]</scope>
    <source>
        <strain>Berkeley</strain>
    </source>
</reference>
<reference key="2">
    <citation type="journal article" date="2002" name="Genome Biol.">
        <title>Annotation of the Drosophila melanogaster euchromatic genome: a systematic review.</title>
        <authorList>
            <person name="Misra S."/>
            <person name="Crosby M.A."/>
            <person name="Mungall C.J."/>
            <person name="Matthews B.B."/>
            <person name="Campbell K.S."/>
            <person name="Hradecky P."/>
            <person name="Huang Y."/>
            <person name="Kaminker J.S."/>
            <person name="Millburn G.H."/>
            <person name="Prochnik S.E."/>
            <person name="Smith C.D."/>
            <person name="Tupy J.L."/>
            <person name="Whitfield E.J."/>
            <person name="Bayraktaroglu L."/>
            <person name="Berman B.P."/>
            <person name="Bettencourt B.R."/>
            <person name="Celniker S.E."/>
            <person name="de Grey A.D.N.J."/>
            <person name="Drysdale R.A."/>
            <person name="Harris N.L."/>
            <person name="Richter J."/>
            <person name="Russo S."/>
            <person name="Schroeder A.J."/>
            <person name="Shu S.Q."/>
            <person name="Stapleton M."/>
            <person name="Yamada C."/>
            <person name="Ashburner M."/>
            <person name="Gelbart W.M."/>
            <person name="Rubin G.M."/>
            <person name="Lewis S.E."/>
        </authorList>
    </citation>
    <scope>GENOME REANNOTATION</scope>
    <source>
        <strain>Berkeley</strain>
    </source>
</reference>
<reference key="3">
    <citation type="journal article" date="2005" name="Mol. Cell">
        <title>PHLPP: a phosphatase that directly dephosphorylates Akt, promotes apoptosis, and suppresses tumor growth.</title>
        <authorList>
            <person name="Gao T."/>
            <person name="Furnari F."/>
            <person name="Newton A.C."/>
        </authorList>
    </citation>
    <scope>FUNCTION</scope>
</reference>
<dbReference type="EC" id="3.1.3.16"/>
<dbReference type="EMBL" id="AE014134">
    <property type="protein sequence ID" value="AAF53751.1"/>
    <property type="molecule type" value="Genomic_DNA"/>
</dbReference>
<dbReference type="RefSeq" id="NP_001260558.1">
    <property type="nucleotide sequence ID" value="NM_001273629.1"/>
</dbReference>
<dbReference type="RefSeq" id="NP_609938.1">
    <property type="nucleotide sequence ID" value="NM_136094.2"/>
</dbReference>
<dbReference type="SMR" id="Q9VJ07"/>
<dbReference type="FunCoup" id="Q9VJ07">
    <property type="interactions" value="9"/>
</dbReference>
<dbReference type="IntAct" id="Q9VJ07">
    <property type="interactions" value="2"/>
</dbReference>
<dbReference type="STRING" id="7227.FBpp0307805"/>
<dbReference type="PaxDb" id="7227-FBpp0080693"/>
<dbReference type="EnsemblMetazoa" id="FBtr0081149">
    <property type="protein sequence ID" value="FBpp0080693"/>
    <property type="gene ID" value="FBgn0032749"/>
</dbReference>
<dbReference type="EnsemblMetazoa" id="FBtr0336844">
    <property type="protein sequence ID" value="FBpp0307805"/>
    <property type="gene ID" value="FBgn0032749"/>
</dbReference>
<dbReference type="GeneID" id="35178"/>
<dbReference type="KEGG" id="dme:Dmel_CG10493"/>
<dbReference type="AGR" id="FB:FBgn0032749"/>
<dbReference type="CTD" id="35178"/>
<dbReference type="FlyBase" id="FBgn0032749">
    <property type="gene designation" value="Phlpp"/>
</dbReference>
<dbReference type="VEuPathDB" id="VectorBase:FBgn0032749"/>
<dbReference type="eggNOG" id="KOG0618">
    <property type="taxonomic scope" value="Eukaryota"/>
</dbReference>
<dbReference type="GeneTree" id="ENSGT00940000161019"/>
<dbReference type="HOGENOM" id="CLU_005692_0_0_1"/>
<dbReference type="InParanoid" id="Q9VJ07"/>
<dbReference type="OMA" id="QFKVCQT"/>
<dbReference type="OrthoDB" id="737510at2759"/>
<dbReference type="PhylomeDB" id="Q9VJ07"/>
<dbReference type="Reactome" id="R-DME-199418">
    <property type="pathway name" value="Negative regulation of the PI3K/AKT network"/>
</dbReference>
<dbReference type="Reactome" id="R-DME-6803207">
    <property type="pathway name" value="TP53 Regulates Transcription of Caspase Activators and Caspases"/>
</dbReference>
<dbReference type="SignaLink" id="Q9VJ07"/>
<dbReference type="BioGRID-ORCS" id="35178">
    <property type="hits" value="0 hits in 3 CRISPR screens"/>
</dbReference>
<dbReference type="GenomeRNAi" id="35178"/>
<dbReference type="PRO" id="PR:Q9VJ07"/>
<dbReference type="Proteomes" id="UP000000803">
    <property type="component" value="Chromosome 2L"/>
</dbReference>
<dbReference type="Bgee" id="FBgn0032749">
    <property type="expression patterns" value="Expressed in pupa"/>
</dbReference>
<dbReference type="ExpressionAtlas" id="Q9VJ07">
    <property type="expression patterns" value="baseline and differential"/>
</dbReference>
<dbReference type="GO" id="GO:0046872">
    <property type="term" value="F:metal ion binding"/>
    <property type="evidence" value="ECO:0007669"/>
    <property type="project" value="UniProtKB-KW"/>
</dbReference>
<dbReference type="GO" id="GO:0004722">
    <property type="term" value="F:protein serine/threonine phosphatase activity"/>
    <property type="evidence" value="ECO:0000314"/>
    <property type="project" value="UniProtKB"/>
</dbReference>
<dbReference type="GO" id="GO:0006915">
    <property type="term" value="P:apoptotic process"/>
    <property type="evidence" value="ECO:0007669"/>
    <property type="project" value="UniProtKB-KW"/>
</dbReference>
<dbReference type="GO" id="GO:0035556">
    <property type="term" value="P:intracellular signal transduction"/>
    <property type="evidence" value="ECO:0000318"/>
    <property type="project" value="GO_Central"/>
</dbReference>
<dbReference type="GO" id="GO:0006470">
    <property type="term" value="P:protein dephosphorylation"/>
    <property type="evidence" value="ECO:0000314"/>
    <property type="project" value="UniProtKB"/>
</dbReference>
<dbReference type="GO" id="GO:0042981">
    <property type="term" value="P:regulation of apoptotic process"/>
    <property type="evidence" value="ECO:0000314"/>
    <property type="project" value="UniProtKB"/>
</dbReference>
<dbReference type="Gene3D" id="3.60.40.10">
    <property type="entry name" value="PPM-type phosphatase domain"/>
    <property type="match status" value="1"/>
</dbReference>
<dbReference type="Gene3D" id="3.80.10.10">
    <property type="entry name" value="Ribonuclease Inhibitor"/>
    <property type="match status" value="2"/>
</dbReference>
<dbReference type="InterPro" id="IPR001611">
    <property type="entry name" value="Leu-rich_rpt"/>
</dbReference>
<dbReference type="InterPro" id="IPR003591">
    <property type="entry name" value="Leu-rich_rpt_typical-subtyp"/>
</dbReference>
<dbReference type="InterPro" id="IPR032675">
    <property type="entry name" value="LRR_dom_sf"/>
</dbReference>
<dbReference type="InterPro" id="IPR036457">
    <property type="entry name" value="PPM-type-like_dom_sf"/>
</dbReference>
<dbReference type="InterPro" id="IPR001932">
    <property type="entry name" value="PPM-type_phosphatase-like_dom"/>
</dbReference>
<dbReference type="PANTHER" id="PTHR24366">
    <property type="entry name" value="IG(IMMUNOGLOBULIN) AND LRR(LEUCINE RICH REPEAT) DOMAINS"/>
    <property type="match status" value="1"/>
</dbReference>
<dbReference type="PANTHER" id="PTHR24366:SF96">
    <property type="entry name" value="LEUCINE RICH REPEAT CONTAINING 53"/>
    <property type="match status" value="1"/>
</dbReference>
<dbReference type="Pfam" id="PF00560">
    <property type="entry name" value="LRR_1"/>
    <property type="match status" value="1"/>
</dbReference>
<dbReference type="Pfam" id="PF13855">
    <property type="entry name" value="LRR_8"/>
    <property type="match status" value="1"/>
</dbReference>
<dbReference type="Pfam" id="PF00481">
    <property type="entry name" value="PP2C"/>
    <property type="match status" value="1"/>
</dbReference>
<dbReference type="SMART" id="SM00364">
    <property type="entry name" value="LRR_BAC"/>
    <property type="match status" value="6"/>
</dbReference>
<dbReference type="SMART" id="SM00369">
    <property type="entry name" value="LRR_TYP"/>
    <property type="match status" value="7"/>
</dbReference>
<dbReference type="SUPFAM" id="SSF52058">
    <property type="entry name" value="L domain-like"/>
    <property type="match status" value="1"/>
</dbReference>
<dbReference type="SUPFAM" id="SSF81606">
    <property type="entry name" value="PP2C-like"/>
    <property type="match status" value="1"/>
</dbReference>
<dbReference type="PROSITE" id="PS51450">
    <property type="entry name" value="LRR"/>
    <property type="match status" value="12"/>
</dbReference>
<dbReference type="PROSITE" id="PS51746">
    <property type="entry name" value="PPM_2"/>
    <property type="match status" value="1"/>
</dbReference>
<evidence type="ECO:0000250" key="1"/>
<evidence type="ECO:0000255" key="2">
    <source>
        <dbReference type="PROSITE-ProRule" id="PRU01082"/>
    </source>
</evidence>
<evidence type="ECO:0000256" key="3">
    <source>
        <dbReference type="SAM" id="MobiDB-lite"/>
    </source>
</evidence>
<evidence type="ECO:0000269" key="4">
    <source>
    </source>
</evidence>
<feature type="chain" id="PRO_0000057787" description="Protein phosphatase PHLPP-like protein">
    <location>
        <begin position="1"/>
        <end position="954"/>
    </location>
</feature>
<feature type="repeat" description="LRR 1">
    <location>
        <begin position="69"/>
        <end position="89"/>
    </location>
</feature>
<feature type="repeat" description="LRR 2">
    <location>
        <begin position="90"/>
        <end position="104"/>
    </location>
</feature>
<feature type="repeat" description="LRR 3">
    <location>
        <begin position="110"/>
        <end position="131"/>
    </location>
</feature>
<feature type="repeat" description="LRR 4">
    <location>
        <begin position="135"/>
        <end position="156"/>
    </location>
</feature>
<feature type="repeat" description="LRR 5">
    <location>
        <begin position="158"/>
        <end position="179"/>
    </location>
</feature>
<feature type="repeat" description="LRR 6">
    <location>
        <begin position="183"/>
        <end position="202"/>
    </location>
</feature>
<feature type="repeat" description="LRR 7">
    <location>
        <begin position="206"/>
        <end position="227"/>
    </location>
</feature>
<feature type="repeat" description="LRR 8">
    <location>
        <begin position="231"/>
        <end position="252"/>
    </location>
</feature>
<feature type="repeat" description="LRR 9">
    <location>
        <begin position="255"/>
        <end position="275"/>
    </location>
</feature>
<feature type="repeat" description="LRR 10">
    <location>
        <begin position="279"/>
        <end position="300"/>
    </location>
</feature>
<feature type="repeat" description="LRR 11">
    <location>
        <begin position="303"/>
        <end position="324"/>
    </location>
</feature>
<feature type="repeat" description="LRR 12">
    <location>
        <begin position="326"/>
        <end position="347"/>
    </location>
</feature>
<feature type="repeat" description="LRR 13">
    <location>
        <begin position="348"/>
        <end position="369"/>
    </location>
</feature>
<feature type="repeat" description="LRR 14">
    <location>
        <begin position="372"/>
        <end position="393"/>
    </location>
</feature>
<feature type="domain" description="PPM-type phosphatase" evidence="2">
    <location>
        <begin position="437"/>
        <end position="655"/>
    </location>
</feature>
<feature type="region of interest" description="Disordered" evidence="3">
    <location>
        <begin position="1"/>
        <end position="28"/>
    </location>
</feature>
<proteinExistence type="predicted"/>
<sequence length="954" mass="107092">MLKATRKQADPYKSKLKVSASHSGPHPLPVEVTAAEEEQAATFGQTSPQKLSLKGSQLGGSILIGNYNYLTQLEVCENEMEVLDLSSLAQLETLKCSRNKLMELIINGTNLQTLVADHNYLHNISTTNTHPVPLKLQRIDISHNNFSELPNWVGACASLTAINASHNRLNNVAVLLRNYRITELVSLDLAYNDLKQLDQFPEGFSSIRSLQLQSNELPSLPDNFFAVTHARLETLNVSCNKLSTLPRYEQNNHAALVNLSLAGNHLNDSIFEPLHNAAKLRVLHLAYNRIGVLPAACVRNWPELEILVLSGNMLQQLPEEVATLGQLRVLRCCNNLLLCTPQLAKLAMLKVLDLSHNHLDRVNLLALVPSRNLKYLDLSGNLQLQVDEQQFKVCQSQSQRHWSLVDVSGNNRAALPTTKIRQVSAQRNQNKTSGPWTMGFAETPGSGDCRKLSVYQLRAANYGGSDEALYGMFEALEGRGRAAQEMSHLVPDLMKQEQMVKDSAVRDYMKFTLLAAQQQCGSVRSAALFHLTRTRAPSKVRPLKSKRYVLRMASTGGLDAYLIRRTSQLRLTKPDVIQKDQIHSMPDPHVLELILSNDDEYLVVGNAQLWSVMDIDRAAREIRKEENSLLAAKRLVDIAQSFAAAESLSVIVVRFRHLGTDVDHLIRELKQSVRKKPQPVSLPLSSGSVCKRTCCDRSNACRHRAIEQEPLAGRSSPSGQSDRDLLAKDKDDEFVLAHARVLQEEQQLEMLDETESVSESVLSEEQFKCWEYMLEQNTQLLFDKELNTISKSFTKQRTVPNAIMAATVLPERNDFTSNLMRTVTNKFISTSTPQLPQPITTSVPLGSYHQVKQAPPGHFGSALSFQQAHSYGYNLFDAKPRPKFHGGTVKRSAGPNSAYFGSLQRLMPYNFEYDFAVTQERERNILDEEEHDDDDFNEHESRMRKYWGVATTEL</sequence>
<protein>
    <recommendedName>
        <fullName>Protein phosphatase PHLPP-like protein</fullName>
        <ecNumber>3.1.3.16</ecNumber>
    </recommendedName>
    <alternativeName>
        <fullName>PH domain leucine-rich repeat protein phosphatase</fullName>
    </alternativeName>
    <alternativeName>
        <fullName>dPHLPP</fullName>
    </alternativeName>
</protein>
<gene>
    <name type="primary">Phlpp</name>
    <name type="ORF">CG10493</name>
</gene>
<name>PHLPP_DROME</name>